<name>SAHH_SULAC</name>
<protein>
    <recommendedName>
        <fullName evidence="1">Adenosylhomocysteinase</fullName>
        <ecNumber evidence="1">3.13.2.1</ecNumber>
    </recommendedName>
    <alternativeName>
        <fullName evidence="1">S-adenosyl-L-homocysteine hydrolase</fullName>
        <shortName evidence="1">AdoHcyase</shortName>
    </alternativeName>
</protein>
<comment type="function">
    <text evidence="1">May play a key role in the regulation of the intracellular concentration of adenosylhomocysteine.</text>
</comment>
<comment type="catalytic activity">
    <reaction evidence="1">
        <text>S-adenosyl-L-homocysteine + H2O = L-homocysteine + adenosine</text>
        <dbReference type="Rhea" id="RHEA:21708"/>
        <dbReference type="ChEBI" id="CHEBI:15377"/>
        <dbReference type="ChEBI" id="CHEBI:16335"/>
        <dbReference type="ChEBI" id="CHEBI:57856"/>
        <dbReference type="ChEBI" id="CHEBI:58199"/>
        <dbReference type="EC" id="3.13.2.1"/>
    </reaction>
</comment>
<comment type="cofactor">
    <cofactor evidence="1">
        <name>NAD(+)</name>
        <dbReference type="ChEBI" id="CHEBI:57540"/>
    </cofactor>
    <text evidence="1">Binds 1 NAD(+) per subunit.</text>
</comment>
<comment type="pathway">
    <text evidence="1">Amino-acid biosynthesis; L-homocysteine biosynthesis; L-homocysteine from S-adenosyl-L-homocysteine: step 1/1.</text>
</comment>
<comment type="subcellular location">
    <subcellularLocation>
        <location evidence="1">Cytoplasm</location>
    </subcellularLocation>
</comment>
<comment type="similarity">
    <text evidence="1">Belongs to the adenosylhomocysteinase family.</text>
</comment>
<accession>Q4JAZ7</accession>
<gene>
    <name evidence="1" type="primary">ahcY</name>
    <name type="ordered locus">Saci_0646</name>
</gene>
<keyword id="KW-0002">3D-structure</keyword>
<keyword id="KW-0963">Cytoplasm</keyword>
<keyword id="KW-0378">Hydrolase</keyword>
<keyword id="KW-0520">NAD</keyword>
<keyword id="KW-0554">One-carbon metabolism</keyword>
<keyword id="KW-1185">Reference proteome</keyword>
<sequence>MDYRVKDLSLAEQGRKQIEWAELHMPALMEIRKRFNAEKPLDGIRIGAVLHVTKETAVLVETLKAGGAEIALAGSNPLSTQDDVAAGLAKNGIHVYAWRGETEKDYYDNIREILKYEPHVIMDDGGDLHAYVHENNLTSKIVGGTEETTTGVIRLKAMEEEKVLKYPVIAVNNAFTKYLFDNRIGTGQSTIDGILRATNILIAGKVAVVIGYGWVGRGIASRFKGMGARVIVVESSPFRALEALMDGFDVMTMNRASEIGDIFVTATGNLNVVSRDHILRMKDGAVLANSGHFNVEIDVKGLKEISVETREVRQNLEEYKLRNGKRIYLLADGRLVNLVAAEGHPSEVMDLSFCNQALSVEHLIKNKGKLENKVYNVPIEIDEQVARLKLKALGIEIEELTIEQKEYIKQWKYGT</sequence>
<feature type="chain" id="PRO_0000117014" description="Adenosylhomocysteinase">
    <location>
        <begin position="1"/>
        <end position="415"/>
    </location>
</feature>
<feature type="binding site" evidence="1">
    <location>
        <position position="53"/>
    </location>
    <ligand>
        <name>substrate</name>
    </ligand>
</feature>
<feature type="binding site" evidence="1">
    <location>
        <position position="124"/>
    </location>
    <ligand>
        <name>substrate</name>
    </ligand>
</feature>
<feature type="binding site" evidence="1">
    <location>
        <position position="147"/>
    </location>
    <ligand>
        <name>substrate</name>
    </ligand>
</feature>
<feature type="binding site" evidence="1">
    <location>
        <begin position="148"/>
        <end position="150"/>
    </location>
    <ligand>
        <name>NAD(+)</name>
        <dbReference type="ChEBI" id="CHEBI:57540"/>
    </ligand>
</feature>
<feature type="binding site" evidence="1">
    <location>
        <position position="177"/>
    </location>
    <ligand>
        <name>substrate</name>
    </ligand>
</feature>
<feature type="binding site" evidence="1">
    <location>
        <position position="181"/>
    </location>
    <ligand>
        <name>substrate</name>
    </ligand>
</feature>
<feature type="binding site" evidence="1">
    <location>
        <position position="182"/>
    </location>
    <ligand>
        <name>NAD(+)</name>
        <dbReference type="ChEBI" id="CHEBI:57540"/>
    </ligand>
</feature>
<feature type="binding site" evidence="1">
    <location>
        <begin position="211"/>
        <end position="216"/>
    </location>
    <ligand>
        <name>NAD(+)</name>
        <dbReference type="ChEBI" id="CHEBI:57540"/>
    </ligand>
</feature>
<feature type="binding site" evidence="1">
    <location>
        <position position="234"/>
    </location>
    <ligand>
        <name>NAD(+)</name>
        <dbReference type="ChEBI" id="CHEBI:57540"/>
    </ligand>
</feature>
<feature type="binding site" evidence="1">
    <location>
        <position position="269"/>
    </location>
    <ligand>
        <name>NAD(+)</name>
        <dbReference type="ChEBI" id="CHEBI:57540"/>
    </ligand>
</feature>
<feature type="binding site" evidence="1">
    <location>
        <begin position="290"/>
        <end position="292"/>
    </location>
    <ligand>
        <name>NAD(+)</name>
        <dbReference type="ChEBI" id="CHEBI:57540"/>
    </ligand>
</feature>
<feature type="binding site" evidence="1">
    <location>
        <position position="337"/>
    </location>
    <ligand>
        <name>NAD(+)</name>
        <dbReference type="ChEBI" id="CHEBI:57540"/>
    </ligand>
</feature>
<feature type="helix" evidence="2">
    <location>
        <begin position="8"/>
        <end position="10"/>
    </location>
</feature>
<feature type="helix" evidence="2">
    <location>
        <begin position="11"/>
        <end position="23"/>
    </location>
</feature>
<feature type="helix" evidence="2">
    <location>
        <begin position="26"/>
        <end position="38"/>
    </location>
</feature>
<feature type="turn" evidence="2">
    <location>
        <begin position="40"/>
        <end position="43"/>
    </location>
</feature>
<feature type="strand" evidence="2">
    <location>
        <begin position="44"/>
        <end position="50"/>
    </location>
</feature>
<feature type="helix" evidence="2">
    <location>
        <begin position="54"/>
        <end position="65"/>
    </location>
</feature>
<feature type="strand" evidence="2">
    <location>
        <begin position="68"/>
        <end position="76"/>
    </location>
</feature>
<feature type="turn" evidence="2">
    <location>
        <begin position="77"/>
        <end position="79"/>
    </location>
</feature>
<feature type="helix" evidence="2">
    <location>
        <begin position="82"/>
        <end position="90"/>
    </location>
</feature>
<feature type="strand" evidence="2">
    <location>
        <begin position="94"/>
        <end position="96"/>
    </location>
</feature>
<feature type="helix" evidence="2">
    <location>
        <begin position="103"/>
        <end position="114"/>
    </location>
</feature>
<feature type="strand" evidence="2">
    <location>
        <begin position="119"/>
        <end position="126"/>
    </location>
</feature>
<feature type="helix" evidence="2">
    <location>
        <begin position="127"/>
        <end position="134"/>
    </location>
</feature>
<feature type="strand" evidence="2">
    <location>
        <begin position="143"/>
        <end position="146"/>
    </location>
</feature>
<feature type="helix" evidence="2">
    <location>
        <begin position="149"/>
        <end position="160"/>
    </location>
</feature>
<feature type="strand" evidence="2">
    <location>
        <begin position="168"/>
        <end position="170"/>
    </location>
</feature>
<feature type="helix" evidence="2">
    <location>
        <begin position="171"/>
        <end position="173"/>
    </location>
</feature>
<feature type="helix" evidence="2">
    <location>
        <begin position="175"/>
        <end position="178"/>
    </location>
</feature>
<feature type="turn" evidence="2">
    <location>
        <begin position="179"/>
        <end position="183"/>
    </location>
</feature>
<feature type="helix" evidence="2">
    <location>
        <begin position="184"/>
        <end position="197"/>
    </location>
</feature>
<feature type="strand" evidence="2">
    <location>
        <begin position="206"/>
        <end position="210"/>
    </location>
</feature>
<feature type="helix" evidence="2">
    <location>
        <begin position="214"/>
        <end position="225"/>
    </location>
</feature>
<feature type="strand" evidence="2">
    <location>
        <begin position="229"/>
        <end position="233"/>
    </location>
</feature>
<feature type="helix" evidence="2">
    <location>
        <begin position="237"/>
        <end position="245"/>
    </location>
</feature>
<feature type="helix" evidence="2">
    <location>
        <begin position="253"/>
        <end position="256"/>
    </location>
</feature>
<feature type="turn" evidence="2">
    <location>
        <begin position="257"/>
        <end position="259"/>
    </location>
</feature>
<feature type="strand" evidence="2">
    <location>
        <begin position="261"/>
        <end position="265"/>
    </location>
</feature>
<feature type="strand" evidence="2">
    <location>
        <begin position="270"/>
        <end position="273"/>
    </location>
</feature>
<feature type="helix" evidence="2">
    <location>
        <begin position="275"/>
        <end position="279"/>
    </location>
</feature>
<feature type="strand" evidence="2">
    <location>
        <begin position="285"/>
        <end position="289"/>
    </location>
</feature>
<feature type="strand" evidence="2">
    <location>
        <begin position="291"/>
        <end position="293"/>
    </location>
</feature>
<feature type="helix" evidence="2">
    <location>
        <begin position="299"/>
        <end position="305"/>
    </location>
</feature>
<feature type="strand" evidence="2">
    <location>
        <begin position="306"/>
        <end position="313"/>
    </location>
</feature>
<feature type="strand" evidence="2">
    <location>
        <begin position="316"/>
        <end position="321"/>
    </location>
</feature>
<feature type="strand" evidence="2">
    <location>
        <begin position="326"/>
        <end position="330"/>
    </location>
</feature>
<feature type="helix" evidence="2">
    <location>
        <begin position="331"/>
        <end position="333"/>
    </location>
</feature>
<feature type="helix" evidence="2">
    <location>
        <begin position="336"/>
        <end position="339"/>
    </location>
</feature>
<feature type="helix" evidence="2">
    <location>
        <begin position="346"/>
        <end position="365"/>
    </location>
</feature>
<feature type="strand" evidence="2">
    <location>
        <begin position="374"/>
        <end position="376"/>
    </location>
</feature>
<feature type="helix" evidence="2">
    <location>
        <begin position="379"/>
        <end position="393"/>
    </location>
</feature>
<feature type="helix" evidence="2">
    <location>
        <begin position="402"/>
        <end position="406"/>
    </location>
</feature>
<dbReference type="EC" id="3.13.2.1" evidence="1"/>
<dbReference type="EMBL" id="CP000077">
    <property type="protein sequence ID" value="AAY80032.1"/>
    <property type="molecule type" value="Genomic_DNA"/>
</dbReference>
<dbReference type="RefSeq" id="WP_011277534.1">
    <property type="nucleotide sequence ID" value="NC_007181.1"/>
</dbReference>
<dbReference type="PDB" id="7R39">
    <property type="method" value="X-ray"/>
    <property type="resolution" value="2.50 A"/>
    <property type="chains" value="A/B/C/D/E/F/G/H=1-415"/>
</dbReference>
<dbReference type="PDBsum" id="7R39"/>
<dbReference type="SMR" id="Q4JAZ7"/>
<dbReference type="STRING" id="330779.Saci_0646"/>
<dbReference type="GeneID" id="14551166"/>
<dbReference type="GeneID" id="78440989"/>
<dbReference type="KEGG" id="sai:Saci_0646"/>
<dbReference type="PATRIC" id="fig|330779.12.peg.619"/>
<dbReference type="eggNOG" id="arCOG04137">
    <property type="taxonomic scope" value="Archaea"/>
</dbReference>
<dbReference type="HOGENOM" id="CLU_025194_0_2_2"/>
<dbReference type="UniPathway" id="UPA00314">
    <property type="reaction ID" value="UER00076"/>
</dbReference>
<dbReference type="Proteomes" id="UP000001018">
    <property type="component" value="Chromosome"/>
</dbReference>
<dbReference type="GO" id="GO:0005829">
    <property type="term" value="C:cytosol"/>
    <property type="evidence" value="ECO:0007669"/>
    <property type="project" value="TreeGrafter"/>
</dbReference>
<dbReference type="GO" id="GO:0004013">
    <property type="term" value="F:adenosylhomocysteinase activity"/>
    <property type="evidence" value="ECO:0007669"/>
    <property type="project" value="UniProtKB-UniRule"/>
</dbReference>
<dbReference type="GO" id="GO:0071269">
    <property type="term" value="P:L-homocysteine biosynthetic process"/>
    <property type="evidence" value="ECO:0007669"/>
    <property type="project" value="UniProtKB-UniRule"/>
</dbReference>
<dbReference type="GO" id="GO:0006730">
    <property type="term" value="P:one-carbon metabolic process"/>
    <property type="evidence" value="ECO:0007669"/>
    <property type="project" value="UniProtKB-KW"/>
</dbReference>
<dbReference type="GO" id="GO:0033353">
    <property type="term" value="P:S-adenosylmethionine cycle"/>
    <property type="evidence" value="ECO:0007669"/>
    <property type="project" value="TreeGrafter"/>
</dbReference>
<dbReference type="CDD" id="cd00401">
    <property type="entry name" value="SAHH"/>
    <property type="match status" value="1"/>
</dbReference>
<dbReference type="FunFam" id="3.40.50.720:FF:000004">
    <property type="entry name" value="Adenosylhomocysteinase"/>
    <property type="match status" value="1"/>
</dbReference>
<dbReference type="Gene3D" id="3.40.50.1480">
    <property type="entry name" value="Adenosylhomocysteinase-like"/>
    <property type="match status" value="1"/>
</dbReference>
<dbReference type="Gene3D" id="3.40.50.720">
    <property type="entry name" value="NAD(P)-binding Rossmann-like Domain"/>
    <property type="match status" value="1"/>
</dbReference>
<dbReference type="HAMAP" id="MF_00563">
    <property type="entry name" value="AdoHcyase"/>
    <property type="match status" value="1"/>
</dbReference>
<dbReference type="InterPro" id="IPR042172">
    <property type="entry name" value="Adenosylhomocyst_ase-like_sf"/>
</dbReference>
<dbReference type="InterPro" id="IPR000043">
    <property type="entry name" value="Adenosylhomocysteinase-like"/>
</dbReference>
<dbReference type="InterPro" id="IPR015878">
    <property type="entry name" value="Ado_hCys_hydrolase_NAD-bd"/>
</dbReference>
<dbReference type="InterPro" id="IPR036291">
    <property type="entry name" value="NAD(P)-bd_dom_sf"/>
</dbReference>
<dbReference type="InterPro" id="IPR020082">
    <property type="entry name" value="S-Ado-L-homoCys_hydrolase_CS"/>
</dbReference>
<dbReference type="NCBIfam" id="TIGR00936">
    <property type="entry name" value="ahcY"/>
    <property type="match status" value="1"/>
</dbReference>
<dbReference type="NCBIfam" id="NF004005">
    <property type="entry name" value="PRK05476.2-3"/>
    <property type="match status" value="1"/>
</dbReference>
<dbReference type="PANTHER" id="PTHR23420">
    <property type="entry name" value="ADENOSYLHOMOCYSTEINASE"/>
    <property type="match status" value="1"/>
</dbReference>
<dbReference type="PANTHER" id="PTHR23420:SF0">
    <property type="entry name" value="ADENOSYLHOMOCYSTEINASE"/>
    <property type="match status" value="1"/>
</dbReference>
<dbReference type="Pfam" id="PF05221">
    <property type="entry name" value="AdoHcyase"/>
    <property type="match status" value="2"/>
</dbReference>
<dbReference type="Pfam" id="PF00670">
    <property type="entry name" value="AdoHcyase_NAD"/>
    <property type="match status" value="1"/>
</dbReference>
<dbReference type="PIRSF" id="PIRSF001109">
    <property type="entry name" value="Ad_hcy_hydrolase"/>
    <property type="match status" value="1"/>
</dbReference>
<dbReference type="SMART" id="SM00996">
    <property type="entry name" value="AdoHcyase"/>
    <property type="match status" value="1"/>
</dbReference>
<dbReference type="SMART" id="SM00997">
    <property type="entry name" value="AdoHcyase_NAD"/>
    <property type="match status" value="1"/>
</dbReference>
<dbReference type="SUPFAM" id="SSF52283">
    <property type="entry name" value="Formate/glycerate dehydrogenase catalytic domain-like"/>
    <property type="match status" value="1"/>
</dbReference>
<dbReference type="SUPFAM" id="SSF51735">
    <property type="entry name" value="NAD(P)-binding Rossmann-fold domains"/>
    <property type="match status" value="1"/>
</dbReference>
<dbReference type="PROSITE" id="PS00738">
    <property type="entry name" value="ADOHCYASE_1"/>
    <property type="match status" value="1"/>
</dbReference>
<dbReference type="PROSITE" id="PS00739">
    <property type="entry name" value="ADOHCYASE_2"/>
    <property type="match status" value="1"/>
</dbReference>
<evidence type="ECO:0000255" key="1">
    <source>
        <dbReference type="HAMAP-Rule" id="MF_00563"/>
    </source>
</evidence>
<evidence type="ECO:0007829" key="2">
    <source>
        <dbReference type="PDB" id="7R39"/>
    </source>
</evidence>
<proteinExistence type="evidence at protein level"/>
<organism>
    <name type="scientific">Sulfolobus acidocaldarius (strain ATCC 33909 / DSM 639 / JCM 8929 / NBRC 15157 / NCIMB 11770)</name>
    <dbReference type="NCBI Taxonomy" id="330779"/>
    <lineage>
        <taxon>Archaea</taxon>
        <taxon>Thermoproteota</taxon>
        <taxon>Thermoprotei</taxon>
        <taxon>Sulfolobales</taxon>
        <taxon>Sulfolobaceae</taxon>
        <taxon>Sulfolobus</taxon>
    </lineage>
</organism>
<reference key="1">
    <citation type="journal article" date="2005" name="J. Bacteriol.">
        <title>The genome of Sulfolobus acidocaldarius, a model organism of the Crenarchaeota.</title>
        <authorList>
            <person name="Chen L."/>
            <person name="Bruegger K."/>
            <person name="Skovgaard M."/>
            <person name="Redder P."/>
            <person name="She Q."/>
            <person name="Torarinsson E."/>
            <person name="Greve B."/>
            <person name="Awayez M."/>
            <person name="Zibat A."/>
            <person name="Klenk H.-P."/>
            <person name="Garrett R.A."/>
        </authorList>
    </citation>
    <scope>NUCLEOTIDE SEQUENCE [LARGE SCALE GENOMIC DNA]</scope>
    <source>
        <strain>ATCC 33909 / DSM 639 / JCM 8929 / NBRC 15157 / NCIMB 11770</strain>
    </source>
</reference>